<accession>Q8R3P6</accession>
<accession>Q3THM0</accession>
<accession>Q3V323</accession>
<accession>Q3V3E8</accession>
<accession>Q8C072</accession>
<proteinExistence type="evidence at protein level"/>
<reference key="1">
    <citation type="journal article" date="2005" name="Science">
        <title>The transcriptional landscape of the mammalian genome.</title>
        <authorList>
            <person name="Carninci P."/>
            <person name="Kasukawa T."/>
            <person name="Katayama S."/>
            <person name="Gough J."/>
            <person name="Frith M.C."/>
            <person name="Maeda N."/>
            <person name="Oyama R."/>
            <person name="Ravasi T."/>
            <person name="Lenhard B."/>
            <person name="Wells C."/>
            <person name="Kodzius R."/>
            <person name="Shimokawa K."/>
            <person name="Bajic V.B."/>
            <person name="Brenner S.E."/>
            <person name="Batalov S."/>
            <person name="Forrest A.R."/>
            <person name="Zavolan M."/>
            <person name="Davis M.J."/>
            <person name="Wilming L.G."/>
            <person name="Aidinis V."/>
            <person name="Allen J.E."/>
            <person name="Ambesi-Impiombato A."/>
            <person name="Apweiler R."/>
            <person name="Aturaliya R.N."/>
            <person name="Bailey T.L."/>
            <person name="Bansal M."/>
            <person name="Baxter L."/>
            <person name="Beisel K.W."/>
            <person name="Bersano T."/>
            <person name="Bono H."/>
            <person name="Chalk A.M."/>
            <person name="Chiu K.P."/>
            <person name="Choudhary V."/>
            <person name="Christoffels A."/>
            <person name="Clutterbuck D.R."/>
            <person name="Crowe M.L."/>
            <person name="Dalla E."/>
            <person name="Dalrymple B.P."/>
            <person name="de Bono B."/>
            <person name="Della Gatta G."/>
            <person name="di Bernardo D."/>
            <person name="Down T."/>
            <person name="Engstrom P."/>
            <person name="Fagiolini M."/>
            <person name="Faulkner G."/>
            <person name="Fletcher C.F."/>
            <person name="Fukushima T."/>
            <person name="Furuno M."/>
            <person name="Futaki S."/>
            <person name="Gariboldi M."/>
            <person name="Georgii-Hemming P."/>
            <person name="Gingeras T.R."/>
            <person name="Gojobori T."/>
            <person name="Green R.E."/>
            <person name="Gustincich S."/>
            <person name="Harbers M."/>
            <person name="Hayashi Y."/>
            <person name="Hensch T.K."/>
            <person name="Hirokawa N."/>
            <person name="Hill D."/>
            <person name="Huminiecki L."/>
            <person name="Iacono M."/>
            <person name="Ikeo K."/>
            <person name="Iwama A."/>
            <person name="Ishikawa T."/>
            <person name="Jakt M."/>
            <person name="Kanapin A."/>
            <person name="Katoh M."/>
            <person name="Kawasawa Y."/>
            <person name="Kelso J."/>
            <person name="Kitamura H."/>
            <person name="Kitano H."/>
            <person name="Kollias G."/>
            <person name="Krishnan S.P."/>
            <person name="Kruger A."/>
            <person name="Kummerfeld S.K."/>
            <person name="Kurochkin I.V."/>
            <person name="Lareau L.F."/>
            <person name="Lazarevic D."/>
            <person name="Lipovich L."/>
            <person name="Liu J."/>
            <person name="Liuni S."/>
            <person name="McWilliam S."/>
            <person name="Madan Babu M."/>
            <person name="Madera M."/>
            <person name="Marchionni L."/>
            <person name="Matsuda H."/>
            <person name="Matsuzawa S."/>
            <person name="Miki H."/>
            <person name="Mignone F."/>
            <person name="Miyake S."/>
            <person name="Morris K."/>
            <person name="Mottagui-Tabar S."/>
            <person name="Mulder N."/>
            <person name="Nakano N."/>
            <person name="Nakauchi H."/>
            <person name="Ng P."/>
            <person name="Nilsson R."/>
            <person name="Nishiguchi S."/>
            <person name="Nishikawa S."/>
            <person name="Nori F."/>
            <person name="Ohara O."/>
            <person name="Okazaki Y."/>
            <person name="Orlando V."/>
            <person name="Pang K.C."/>
            <person name="Pavan W.J."/>
            <person name="Pavesi G."/>
            <person name="Pesole G."/>
            <person name="Petrovsky N."/>
            <person name="Piazza S."/>
            <person name="Reed J."/>
            <person name="Reid J.F."/>
            <person name="Ring B.Z."/>
            <person name="Ringwald M."/>
            <person name="Rost B."/>
            <person name="Ruan Y."/>
            <person name="Salzberg S.L."/>
            <person name="Sandelin A."/>
            <person name="Schneider C."/>
            <person name="Schoenbach C."/>
            <person name="Sekiguchi K."/>
            <person name="Semple C.A."/>
            <person name="Seno S."/>
            <person name="Sessa L."/>
            <person name="Sheng Y."/>
            <person name="Shibata Y."/>
            <person name="Shimada H."/>
            <person name="Shimada K."/>
            <person name="Silva D."/>
            <person name="Sinclair B."/>
            <person name="Sperling S."/>
            <person name="Stupka E."/>
            <person name="Sugiura K."/>
            <person name="Sultana R."/>
            <person name="Takenaka Y."/>
            <person name="Taki K."/>
            <person name="Tammoja K."/>
            <person name="Tan S.L."/>
            <person name="Tang S."/>
            <person name="Taylor M.S."/>
            <person name="Tegner J."/>
            <person name="Teichmann S.A."/>
            <person name="Ueda H.R."/>
            <person name="van Nimwegen E."/>
            <person name="Verardo R."/>
            <person name="Wei C.L."/>
            <person name="Yagi K."/>
            <person name="Yamanishi H."/>
            <person name="Zabarovsky E."/>
            <person name="Zhu S."/>
            <person name="Zimmer A."/>
            <person name="Hide W."/>
            <person name="Bult C."/>
            <person name="Grimmond S.M."/>
            <person name="Teasdale R.D."/>
            <person name="Liu E.T."/>
            <person name="Brusic V."/>
            <person name="Quackenbush J."/>
            <person name="Wahlestedt C."/>
            <person name="Mattick J.S."/>
            <person name="Hume D.A."/>
            <person name="Kai C."/>
            <person name="Sasaki D."/>
            <person name="Tomaru Y."/>
            <person name="Fukuda S."/>
            <person name="Kanamori-Katayama M."/>
            <person name="Suzuki M."/>
            <person name="Aoki J."/>
            <person name="Arakawa T."/>
            <person name="Iida J."/>
            <person name="Imamura K."/>
            <person name="Itoh M."/>
            <person name="Kato T."/>
            <person name="Kawaji H."/>
            <person name="Kawagashira N."/>
            <person name="Kawashima T."/>
            <person name="Kojima M."/>
            <person name="Kondo S."/>
            <person name="Konno H."/>
            <person name="Nakano K."/>
            <person name="Ninomiya N."/>
            <person name="Nishio T."/>
            <person name="Okada M."/>
            <person name="Plessy C."/>
            <person name="Shibata K."/>
            <person name="Shiraki T."/>
            <person name="Suzuki S."/>
            <person name="Tagami M."/>
            <person name="Waki K."/>
            <person name="Watahiki A."/>
            <person name="Okamura-Oho Y."/>
            <person name="Suzuki H."/>
            <person name="Kawai J."/>
            <person name="Hayashizaki Y."/>
        </authorList>
    </citation>
    <scope>NUCLEOTIDE SEQUENCE [LARGE SCALE MRNA] (ISOFORMS 1 AND 2)</scope>
    <source>
        <strain>C57BL/6J</strain>
        <strain>DBA/2J</strain>
        <strain>NOD</strain>
        <tissue>Medulla oblongata</tissue>
        <tissue>Thymus</tissue>
        <tissue>Urinary bladder</tissue>
    </source>
</reference>
<reference key="2">
    <citation type="journal article" date="2004" name="Genome Res.">
        <title>The status, quality, and expansion of the NIH full-length cDNA project: the Mammalian Gene Collection (MGC).</title>
        <authorList>
            <consortium name="The MGC Project Team"/>
        </authorList>
    </citation>
    <scope>NUCLEOTIDE SEQUENCE [LARGE SCALE MRNA] (ISOFORM 1)</scope>
    <source>
        <strain>FVB/N</strain>
        <tissue>Mammary tumor</tissue>
    </source>
</reference>
<reference key="3">
    <citation type="journal article" date="2010" name="Cell">
        <title>A tissue-specific atlas of mouse protein phosphorylation and expression.</title>
        <authorList>
            <person name="Huttlin E.L."/>
            <person name="Jedrychowski M.P."/>
            <person name="Elias J.E."/>
            <person name="Goswami T."/>
            <person name="Rad R."/>
            <person name="Beausoleil S.A."/>
            <person name="Villen J."/>
            <person name="Haas W."/>
            <person name="Sowa M.E."/>
            <person name="Gygi S.P."/>
        </authorList>
    </citation>
    <scope>IDENTIFICATION BY MASS SPECTROMETRY [LARGE SCALE ANALYSIS]</scope>
    <source>
        <tissue>Testis</tissue>
    </source>
</reference>
<dbReference type="EMBL" id="AK032095">
    <property type="protein sequence ID" value="BAC27696.1"/>
    <property type="status" value="ALT_FRAME"/>
    <property type="molecule type" value="mRNA"/>
</dbReference>
<dbReference type="EMBL" id="AK035654">
    <property type="protein sequence ID" value="BAC29140.1"/>
    <property type="molecule type" value="mRNA"/>
</dbReference>
<dbReference type="EMBL" id="AK041578">
    <property type="protein sequence ID" value="BAE20594.1"/>
    <property type="molecule type" value="mRNA"/>
</dbReference>
<dbReference type="EMBL" id="AK050654">
    <property type="protein sequence ID" value="BAE20686.1"/>
    <property type="molecule type" value="mRNA"/>
</dbReference>
<dbReference type="EMBL" id="AK168222">
    <property type="protein sequence ID" value="BAE40176.1"/>
    <property type="molecule type" value="mRNA"/>
</dbReference>
<dbReference type="EMBL" id="AK169772">
    <property type="protein sequence ID" value="BAE41357.1"/>
    <property type="molecule type" value="mRNA"/>
</dbReference>
<dbReference type="EMBL" id="BC024913">
    <property type="protein sequence ID" value="AAH24913.1"/>
    <property type="molecule type" value="mRNA"/>
</dbReference>
<dbReference type="CCDS" id="CCDS40668.1">
    <molecule id="Q8R3P6-1"/>
</dbReference>
<dbReference type="RefSeq" id="NP_001071099.1">
    <molecule id="Q8R3P6-1"/>
    <property type="nucleotide sequence ID" value="NM_001077631.3"/>
</dbReference>
<dbReference type="RefSeq" id="NP_001403190.1">
    <molecule id="Q8R3P6-1"/>
    <property type="nucleotide sequence ID" value="NM_001416261.1"/>
</dbReference>
<dbReference type="RefSeq" id="NP_780362.2">
    <molecule id="Q8R3P6-1"/>
    <property type="nucleotide sequence ID" value="NM_175153.5"/>
</dbReference>
<dbReference type="SMR" id="Q8R3P6"/>
<dbReference type="BioGRID" id="213732">
    <property type="interactions" value="3"/>
</dbReference>
<dbReference type="FunCoup" id="Q8R3P6">
    <property type="interactions" value="4290"/>
</dbReference>
<dbReference type="STRING" id="10090.ENSMUSP00000049284"/>
<dbReference type="iPTMnet" id="Q8R3P6"/>
<dbReference type="PhosphoSitePlus" id="Q8R3P6"/>
<dbReference type="PaxDb" id="10090-ENSMUSP00000049284"/>
<dbReference type="PeptideAtlas" id="Q8R3P6"/>
<dbReference type="ProteomicsDB" id="269487">
    <molecule id="Q8R3P6-1"/>
</dbReference>
<dbReference type="ProteomicsDB" id="269488">
    <molecule id="Q8R3P6-2"/>
</dbReference>
<dbReference type="Pumba" id="Q8R3P6"/>
<dbReference type="Antibodypedia" id="52220">
    <property type="antibodies" value="89 antibodies from 16 providers"/>
</dbReference>
<dbReference type="DNASU" id="69882"/>
<dbReference type="Ensembl" id="ENSMUST00000037504.7">
    <molecule id="Q8R3P6-1"/>
    <property type="protein sequence ID" value="ENSMUSP00000049284.6"/>
    <property type="gene ID" value="ENSMUSG00000034263.14"/>
</dbReference>
<dbReference type="Ensembl" id="ENSMUST00000170517.9">
    <molecule id="Q8R3P6-1"/>
    <property type="protein sequence ID" value="ENSMUSP00000127420.2"/>
    <property type="gene ID" value="ENSMUSG00000034263.14"/>
</dbReference>
<dbReference type="GeneID" id="69882"/>
<dbReference type="KEGG" id="mmu:69882"/>
<dbReference type="UCSC" id="uc009qcm.1">
    <molecule id="Q8R3P6-2"/>
    <property type="organism name" value="mouse"/>
</dbReference>
<dbReference type="UCSC" id="uc009qcn.2">
    <molecule id="Q8R3P6-1"/>
    <property type="organism name" value="mouse"/>
</dbReference>
<dbReference type="AGR" id="MGI:1917132"/>
<dbReference type="CTD" id="81556"/>
<dbReference type="MGI" id="MGI:1917132">
    <property type="gene designation" value="Ints14"/>
</dbReference>
<dbReference type="VEuPathDB" id="HostDB:ENSMUSG00000034263"/>
<dbReference type="eggNOG" id="ENOG502QQ37">
    <property type="taxonomic scope" value="Eukaryota"/>
</dbReference>
<dbReference type="GeneTree" id="ENSGT00390000009486"/>
<dbReference type="HOGENOM" id="CLU_041485_0_0_1"/>
<dbReference type="InParanoid" id="Q8R3P6"/>
<dbReference type="OMA" id="QSSVVWI"/>
<dbReference type="OrthoDB" id="15652at9989"/>
<dbReference type="PhylomeDB" id="Q8R3P6"/>
<dbReference type="TreeFam" id="TF323245"/>
<dbReference type="Reactome" id="R-MMU-6807505">
    <property type="pathway name" value="RNA polymerase II transcribes snRNA genes"/>
</dbReference>
<dbReference type="BioGRID-ORCS" id="69882">
    <property type="hits" value="24 hits in 79 CRISPR screens"/>
</dbReference>
<dbReference type="ChiTaRS" id="Ints14">
    <property type="organism name" value="mouse"/>
</dbReference>
<dbReference type="PRO" id="PR:Q8R3P6"/>
<dbReference type="Proteomes" id="UP000000589">
    <property type="component" value="Chromosome 9"/>
</dbReference>
<dbReference type="RNAct" id="Q8R3P6">
    <property type="molecule type" value="protein"/>
</dbReference>
<dbReference type="Bgee" id="ENSMUSG00000034263">
    <property type="expression patterns" value="Expressed in undifferentiated genital tubercle and 244 other cell types or tissues"/>
</dbReference>
<dbReference type="GO" id="GO:0160232">
    <property type="term" value="C:INTAC complex"/>
    <property type="evidence" value="ECO:0000250"/>
    <property type="project" value="UniProtKB"/>
</dbReference>
<dbReference type="GO" id="GO:0032039">
    <property type="term" value="C:integrator complex"/>
    <property type="evidence" value="ECO:0007669"/>
    <property type="project" value="Ensembl"/>
</dbReference>
<dbReference type="GO" id="GO:0160240">
    <property type="term" value="P:RNA polymerase II transcription initiation surveillance"/>
    <property type="evidence" value="ECO:0000250"/>
    <property type="project" value="UniProtKB"/>
</dbReference>
<dbReference type="GO" id="GO:0016180">
    <property type="term" value="P:snRNA processing"/>
    <property type="evidence" value="ECO:0007669"/>
    <property type="project" value="Ensembl"/>
</dbReference>
<dbReference type="FunFam" id="3.40.50.410:FF:000137">
    <property type="entry name" value="Integrator complex subunit 14"/>
    <property type="match status" value="1"/>
</dbReference>
<dbReference type="Gene3D" id="3.40.50.410">
    <property type="entry name" value="von Willebrand factor, type A domain"/>
    <property type="match status" value="1"/>
</dbReference>
<dbReference type="InterPro" id="IPR039841">
    <property type="entry name" value="INTS14"/>
</dbReference>
<dbReference type="InterPro" id="IPR045814">
    <property type="entry name" value="IntS14_b-barrel"/>
</dbReference>
<dbReference type="InterPro" id="IPR046471">
    <property type="entry name" value="IntS14_C"/>
</dbReference>
<dbReference type="InterPro" id="IPR002035">
    <property type="entry name" value="VWF_A"/>
</dbReference>
<dbReference type="InterPro" id="IPR036465">
    <property type="entry name" value="vWFA_dom_sf"/>
</dbReference>
<dbReference type="PANTHER" id="PTHR13532">
    <property type="match status" value="1"/>
</dbReference>
<dbReference type="PANTHER" id="PTHR13532:SF3">
    <property type="entry name" value="INTEGRATOR COMPLEX SUBUNIT 14"/>
    <property type="match status" value="1"/>
</dbReference>
<dbReference type="Pfam" id="PF19435">
    <property type="entry name" value="IntS14_b-barrel"/>
    <property type="match status" value="1"/>
</dbReference>
<dbReference type="Pfam" id="PF20504">
    <property type="entry name" value="IntS14_C"/>
    <property type="match status" value="1"/>
</dbReference>
<dbReference type="Pfam" id="PF13519">
    <property type="entry name" value="VWA_2"/>
    <property type="match status" value="1"/>
</dbReference>
<dbReference type="SUPFAM" id="SSF53300">
    <property type="entry name" value="vWA-like"/>
    <property type="match status" value="1"/>
</dbReference>
<gene>
    <name evidence="5" type="primary">Ints14</name>
    <name evidence="5" type="synonym">Vwa9</name>
</gene>
<feature type="chain" id="PRO_0000296268" description="Integrator complex subunit 14">
    <location>
        <begin position="1"/>
        <end position="515"/>
    </location>
</feature>
<feature type="domain" description="VWFA">
    <location>
        <begin position="2"/>
        <end position="204"/>
    </location>
</feature>
<feature type="binding site" evidence="1">
    <location>
        <position position="10"/>
    </location>
    <ligand>
        <name>Mg(2+)</name>
        <dbReference type="ChEBI" id="CHEBI:18420"/>
    </ligand>
</feature>
<feature type="binding site" evidence="1">
    <location>
        <position position="12"/>
    </location>
    <ligand>
        <name>Mg(2+)</name>
        <dbReference type="ChEBI" id="CHEBI:18420"/>
    </ligand>
</feature>
<feature type="binding site" evidence="1">
    <location>
        <position position="86"/>
    </location>
    <ligand>
        <name>Mg(2+)</name>
        <dbReference type="ChEBI" id="CHEBI:18420"/>
    </ligand>
</feature>
<feature type="modified residue" description="N6-acetyllysine" evidence="1">
    <location>
        <position position="418"/>
    </location>
</feature>
<feature type="splice variant" id="VSP_027182" description="In isoform 2." evidence="3">
    <original>DLEIVGFI</original>
    <variation>GNCLKLPS</variation>
    <location>
        <begin position="250"/>
        <end position="257"/>
    </location>
</feature>
<feature type="splice variant" id="VSP_027183" description="In isoform 2." evidence="3">
    <location>
        <begin position="258"/>
        <end position="515"/>
    </location>
</feature>
<feature type="sequence conflict" description="In Ref. 1; BAC27696." evidence="4" ref="1">
    <original>L</original>
    <variation>I</variation>
    <location>
        <position position="178"/>
    </location>
</feature>
<feature type="sequence conflict" description="In Ref. 1; BAE40176." evidence="4" ref="1">
    <original>A</original>
    <variation>T</variation>
    <location>
        <position position="482"/>
    </location>
</feature>
<comment type="function">
    <text evidence="1">Component of the integrator complex, a multiprotein complex that terminates RNA polymerase II (Pol II) transcription in the promoter-proximal region of genes. The integrator complex provides a quality checkpoint during transcription elongation by driving premature transcription termination of transcripts that are unfavorably configured for transcriptional elongation: the complex terminates transcription by (1) catalyzing dephosphorylation of the C-terminal domain (CTD) of Pol II subunit POLR2A/RPB1 and SUPT5H/SPT5, (2) degrading the exiting nascent RNA transcript via endonuclease activity and (3) promoting the release of Pol II from bound DNA. The integrator complex is also involved in terminating the synthesis of non-coding Pol II transcripts, such as enhancer RNAs (eRNAs), small nuclear RNAs (snRNAs), telomerase RNAs and long non-coding RNAs (lncRNAs). Within the integrator complex, INTS14 is part of the integrator tail module that acts as a platform for the recruitment of transcription factors at promoters.</text>
</comment>
<comment type="subunit">
    <text evidence="1">Component of the Integrator complex, composed of core subunits INTS1, INTS2, INTS3, INTS4, INTS5, INTS6, INTS7, INTS8, INTS9/RC74, INTS10, INTS11/CPSF3L, INTS12, INTS13, INTS14 and INTS15. The core complex associates with protein phosphatase 2A subunits PPP2CA and PPP2R1A, to form the Integrator-PP2A (INTAC) complex. INTS14 is part of the tail subcomplex, composed of INTS10, INTS13, INTS14 and INTS15.</text>
</comment>
<comment type="subcellular location">
    <subcellularLocation>
        <location evidence="2">Nucleus</location>
    </subcellularLocation>
</comment>
<comment type="alternative products">
    <event type="alternative splicing"/>
    <isoform>
        <id>Q8R3P6-1</id>
        <name>1</name>
        <sequence type="displayed"/>
    </isoform>
    <isoform>
        <id>Q8R3P6-2</id>
        <name>2</name>
        <sequence type="described" ref="VSP_027182 VSP_027183"/>
    </isoform>
</comment>
<comment type="similarity">
    <text evidence="4">Belongs to the Integrator subunit 14 family.</text>
</comment>
<comment type="sequence caution" evidence="4">
    <conflict type="frameshift">
        <sequence resource="EMBL-CDS" id="BAC27696"/>
    </conflict>
</comment>
<evidence type="ECO:0000250" key="1">
    <source>
        <dbReference type="UniProtKB" id="Q96SY0"/>
    </source>
</evidence>
<evidence type="ECO:0000250" key="2">
    <source>
        <dbReference type="UniProtKB" id="Q9VPY0"/>
    </source>
</evidence>
<evidence type="ECO:0000303" key="3">
    <source>
    </source>
</evidence>
<evidence type="ECO:0000305" key="4"/>
<evidence type="ECO:0000312" key="5">
    <source>
        <dbReference type="MGI" id="MGI:1917132"/>
    </source>
</evidence>
<protein>
    <recommendedName>
        <fullName evidence="5">Integrator complex subunit 14</fullName>
    </recommendedName>
    <alternativeName>
        <fullName evidence="4">von Willebrand factor A domain-containing protein 9</fullName>
    </alternativeName>
</protein>
<keyword id="KW-0007">Acetylation</keyword>
<keyword id="KW-0025">Alternative splicing</keyword>
<keyword id="KW-0460">Magnesium</keyword>
<keyword id="KW-0479">Metal-binding</keyword>
<keyword id="KW-0539">Nucleus</keyword>
<keyword id="KW-1185">Reference proteome</keyword>
<sequence length="515" mass="57237">MPTVVVMDVSLSMTRPVSVEGSEEYQRKHLAAHGLTMLFEHMATNYKLEFTALVVFSSLWELMVPFTRDYNTLQEALSNMDDYDKTCLESALVGVCNIVQQEWGGAIPCQVVLVTDGCLGIGRGSLRHSLATQNQRSESNRFPLPFPFPSKLYVMCMANLEELQSTDSLECLERLIDLNNGEGQIFTIDGPLCLKNVQSMFGKLIDLAYTPFHAVLKCGHLTADVQVFPRPEPFVIDEEIDPIPKVINTDLEIVGFIDIADISSPPVLSRHLVLPIALNKEGDEVGAGITDDNEDENSANQIAGKIPNFCVLLHGSLKVEGMVALVQLGPEWHGMLYSQADSKKKSNLMMSLFEPGPEPLPWLGKMAQLGPISDAKENPYGEDDNKSPFPLQPKNKRSYAQNVTVWIKPSGLQTDVQKILRNARKLPEKTQTFYKELNRLRKAALAFGFLDLLKGVADMLERECTLLPDTAHPDAAFQLTHAAQQLKLASTEYAIYDHNITPLHTDFSGSSTERM</sequence>
<name>INT14_MOUSE</name>
<organism>
    <name type="scientific">Mus musculus</name>
    <name type="common">Mouse</name>
    <dbReference type="NCBI Taxonomy" id="10090"/>
    <lineage>
        <taxon>Eukaryota</taxon>
        <taxon>Metazoa</taxon>
        <taxon>Chordata</taxon>
        <taxon>Craniata</taxon>
        <taxon>Vertebrata</taxon>
        <taxon>Euteleostomi</taxon>
        <taxon>Mammalia</taxon>
        <taxon>Eutheria</taxon>
        <taxon>Euarchontoglires</taxon>
        <taxon>Glires</taxon>
        <taxon>Rodentia</taxon>
        <taxon>Myomorpha</taxon>
        <taxon>Muroidea</taxon>
        <taxon>Muridae</taxon>
        <taxon>Murinae</taxon>
        <taxon>Mus</taxon>
        <taxon>Mus</taxon>
    </lineage>
</organism>